<protein>
    <recommendedName>
        <fullName>Lysozyme C</fullName>
        <ecNumber>3.2.1.17</ecNumber>
    </recommendedName>
    <alternativeName>
        <fullName>1,4-beta-N-acetylmuramidase C</fullName>
    </alternativeName>
</protein>
<dbReference type="EC" id="3.2.1.17"/>
<dbReference type="PIR" id="C92574">
    <property type="entry name" value="LZTK"/>
</dbReference>
<dbReference type="RefSeq" id="XP_003202118.1">
    <property type="nucleotide sequence ID" value="XM_003202070.4"/>
</dbReference>
<dbReference type="PDB" id="135L">
    <property type="method" value="X-ray"/>
    <property type="resolution" value="1.30 A"/>
    <property type="chains" value="A=19-147"/>
</dbReference>
<dbReference type="PDB" id="1DZB">
    <property type="method" value="X-ray"/>
    <property type="resolution" value="2.00 A"/>
    <property type="chains" value="X/Y=19-147"/>
</dbReference>
<dbReference type="PDB" id="1JEF">
    <property type="method" value="X-ray"/>
    <property type="resolution" value="1.77 A"/>
    <property type="chains" value="A=19-147"/>
</dbReference>
<dbReference type="PDB" id="1JSE">
    <property type="method" value="X-ray"/>
    <property type="resolution" value="1.12 A"/>
    <property type="chains" value="A=19-147"/>
</dbReference>
<dbReference type="PDB" id="1JTP">
    <property type="method" value="X-ray"/>
    <property type="resolution" value="1.90 A"/>
    <property type="chains" value="L/M=19-147"/>
</dbReference>
<dbReference type="PDB" id="1LJN">
    <property type="method" value="X-ray"/>
    <property type="resolution" value="1.19 A"/>
    <property type="chains" value="A=19-147"/>
</dbReference>
<dbReference type="PDB" id="1LZ2">
    <property type="method" value="X-ray"/>
    <property type="resolution" value="2.80 A"/>
    <property type="chains" value="A=19-147"/>
</dbReference>
<dbReference type="PDB" id="1LZY">
    <property type="method" value="X-ray"/>
    <property type="resolution" value="1.55 A"/>
    <property type="chains" value="A=19-147"/>
</dbReference>
<dbReference type="PDB" id="1TEW">
    <property type="method" value="X-ray"/>
    <property type="resolution" value="1.65 A"/>
    <property type="chains" value="A=19-147"/>
</dbReference>
<dbReference type="PDB" id="1UAC">
    <property type="method" value="X-ray"/>
    <property type="resolution" value="1.70 A"/>
    <property type="chains" value="Y=19-147"/>
</dbReference>
<dbReference type="PDB" id="1XFT">
    <property type="method" value="X-ray"/>
    <property type="resolution" value="3.35 A"/>
    <property type="chains" value="A=19-147"/>
</dbReference>
<dbReference type="PDB" id="2LZ2">
    <property type="method" value="X-ray"/>
    <property type="resolution" value="2.20 A"/>
    <property type="chains" value="A=19-147"/>
</dbReference>
<dbReference type="PDB" id="3LZ2">
    <property type="method" value="X-ray"/>
    <property type="resolution" value="2.50 A"/>
    <property type="chains" value="A=19-147"/>
</dbReference>
<dbReference type="PDBsum" id="135L"/>
<dbReference type="PDBsum" id="1DZB"/>
<dbReference type="PDBsum" id="1JEF"/>
<dbReference type="PDBsum" id="1JSE"/>
<dbReference type="PDBsum" id="1JTP"/>
<dbReference type="PDBsum" id="1LJN"/>
<dbReference type="PDBsum" id="1LZ2"/>
<dbReference type="PDBsum" id="1LZY"/>
<dbReference type="PDBsum" id="1TEW"/>
<dbReference type="PDBsum" id="1UAC"/>
<dbReference type="PDBsum" id="1XFT"/>
<dbReference type="PDBsum" id="2LZ2"/>
<dbReference type="PDBsum" id="3LZ2"/>
<dbReference type="BMRB" id="P00703"/>
<dbReference type="SMR" id="P00703"/>
<dbReference type="FunCoup" id="P00703">
    <property type="interactions" value="36"/>
</dbReference>
<dbReference type="CAZy" id="GH22">
    <property type="family name" value="Glycoside Hydrolase Family 22"/>
</dbReference>
<dbReference type="ABCD" id="P00703">
    <property type="antibodies" value="7 sequenced antibodies"/>
</dbReference>
<dbReference type="Ensembl" id="ENSMGAT00000011853.2">
    <property type="protein sequence ID" value="ENSMGAP00000010985.1"/>
    <property type="gene ID" value="ENSMGAG00000010559.2"/>
</dbReference>
<dbReference type="GeneID" id="100547044"/>
<dbReference type="KEGG" id="mgp:100547044"/>
<dbReference type="CTD" id="4069"/>
<dbReference type="GeneTree" id="ENSGT00940000153832"/>
<dbReference type="HOGENOM" id="CLU_111620_0_1_1"/>
<dbReference type="InParanoid" id="P00703"/>
<dbReference type="OMA" id="GNGMNAW"/>
<dbReference type="OrthoDB" id="17373at2759"/>
<dbReference type="TreeFam" id="TF324882"/>
<dbReference type="EvolutionaryTrace" id="P00703"/>
<dbReference type="Proteomes" id="UP000001645">
    <property type="component" value="Chromosome 1"/>
</dbReference>
<dbReference type="Bgee" id="ENSMGAG00000010559">
    <property type="expression patterns" value="Expressed in bursa of Fabricius and 12 other cell types or tissues"/>
</dbReference>
<dbReference type="GO" id="GO:0005737">
    <property type="term" value="C:cytoplasm"/>
    <property type="evidence" value="ECO:0000314"/>
    <property type="project" value="CAFA"/>
</dbReference>
<dbReference type="GO" id="GO:0005615">
    <property type="term" value="C:extracellular space"/>
    <property type="evidence" value="ECO:0007669"/>
    <property type="project" value="Ensembl"/>
</dbReference>
<dbReference type="GO" id="GO:0005539">
    <property type="term" value="F:glycosaminoglycan binding"/>
    <property type="evidence" value="ECO:0000314"/>
    <property type="project" value="CAFA"/>
</dbReference>
<dbReference type="GO" id="GO:0042802">
    <property type="term" value="F:identical protein binding"/>
    <property type="evidence" value="ECO:0007669"/>
    <property type="project" value="Ensembl"/>
</dbReference>
<dbReference type="GO" id="GO:0003796">
    <property type="term" value="F:lysozyme activity"/>
    <property type="evidence" value="ECO:0000314"/>
    <property type="project" value="CAFA"/>
</dbReference>
<dbReference type="GO" id="GO:0016998">
    <property type="term" value="P:cell wall macromolecule catabolic process"/>
    <property type="evidence" value="ECO:0000314"/>
    <property type="project" value="CAFA"/>
</dbReference>
<dbReference type="GO" id="GO:0050829">
    <property type="term" value="P:defense response to Gram-negative bacterium"/>
    <property type="evidence" value="ECO:0007669"/>
    <property type="project" value="TreeGrafter"/>
</dbReference>
<dbReference type="GO" id="GO:0050830">
    <property type="term" value="P:defense response to Gram-positive bacterium"/>
    <property type="evidence" value="ECO:0007669"/>
    <property type="project" value="Ensembl"/>
</dbReference>
<dbReference type="GO" id="GO:0031640">
    <property type="term" value="P:killing of cells of another organism"/>
    <property type="evidence" value="ECO:0007669"/>
    <property type="project" value="UniProtKB-KW"/>
</dbReference>
<dbReference type="CDD" id="cd16897">
    <property type="entry name" value="LYZ_C"/>
    <property type="match status" value="1"/>
</dbReference>
<dbReference type="FunFam" id="1.10.530.10:FF:000001">
    <property type="entry name" value="Lysozyme C"/>
    <property type="match status" value="1"/>
</dbReference>
<dbReference type="Gene3D" id="1.10.530.10">
    <property type="match status" value="1"/>
</dbReference>
<dbReference type="InterPro" id="IPR001916">
    <property type="entry name" value="Glyco_hydro_22"/>
</dbReference>
<dbReference type="InterPro" id="IPR019799">
    <property type="entry name" value="Glyco_hydro_22_CS"/>
</dbReference>
<dbReference type="InterPro" id="IPR000974">
    <property type="entry name" value="Glyco_hydro_22_lys"/>
</dbReference>
<dbReference type="InterPro" id="IPR023346">
    <property type="entry name" value="Lysozyme-like_dom_sf"/>
</dbReference>
<dbReference type="PANTHER" id="PTHR11407">
    <property type="entry name" value="LYSOZYME C"/>
    <property type="match status" value="1"/>
</dbReference>
<dbReference type="PANTHER" id="PTHR11407:SF28">
    <property type="entry name" value="LYSOZYME C"/>
    <property type="match status" value="1"/>
</dbReference>
<dbReference type="Pfam" id="PF00062">
    <property type="entry name" value="Lys"/>
    <property type="match status" value="1"/>
</dbReference>
<dbReference type="PRINTS" id="PR00137">
    <property type="entry name" value="LYSOZYME"/>
</dbReference>
<dbReference type="PRINTS" id="PR00135">
    <property type="entry name" value="LYZLACT"/>
</dbReference>
<dbReference type="SMART" id="SM00263">
    <property type="entry name" value="LYZ1"/>
    <property type="match status" value="1"/>
</dbReference>
<dbReference type="SUPFAM" id="SSF53955">
    <property type="entry name" value="Lysozyme-like"/>
    <property type="match status" value="1"/>
</dbReference>
<dbReference type="PROSITE" id="PS00128">
    <property type="entry name" value="GLYCOSYL_HYDROL_F22_1"/>
    <property type="match status" value="1"/>
</dbReference>
<dbReference type="PROSITE" id="PS51348">
    <property type="entry name" value="GLYCOSYL_HYDROL_F22_2"/>
    <property type="match status" value="1"/>
</dbReference>
<evidence type="ECO:0000255" key="1">
    <source>
        <dbReference type="PROSITE-ProRule" id="PRU00680"/>
    </source>
</evidence>
<evidence type="ECO:0000269" key="2">
    <source>
    </source>
</evidence>
<evidence type="ECO:0000269" key="3">
    <source>
    </source>
</evidence>
<evidence type="ECO:0007829" key="4">
    <source>
        <dbReference type="PDB" id="1JSE"/>
    </source>
</evidence>
<evidence type="ECO:0007829" key="5">
    <source>
        <dbReference type="PDB" id="1JTP"/>
    </source>
</evidence>
<evidence type="ECO:0007829" key="6">
    <source>
        <dbReference type="PDB" id="1TEW"/>
    </source>
</evidence>
<evidence type="ECO:0007829" key="7">
    <source>
        <dbReference type="PDB" id="2LZ2"/>
    </source>
</evidence>
<organism>
    <name type="scientific">Meleagris gallopavo</name>
    <name type="common">Wild turkey</name>
    <dbReference type="NCBI Taxonomy" id="9103"/>
    <lineage>
        <taxon>Eukaryota</taxon>
        <taxon>Metazoa</taxon>
        <taxon>Chordata</taxon>
        <taxon>Craniata</taxon>
        <taxon>Vertebrata</taxon>
        <taxon>Euteleostomi</taxon>
        <taxon>Archelosauria</taxon>
        <taxon>Archosauria</taxon>
        <taxon>Dinosauria</taxon>
        <taxon>Saurischia</taxon>
        <taxon>Theropoda</taxon>
        <taxon>Coelurosauria</taxon>
        <taxon>Aves</taxon>
        <taxon>Neognathae</taxon>
        <taxon>Galloanserae</taxon>
        <taxon>Galliformes</taxon>
        <taxon>Phasianidae</taxon>
        <taxon>Meleagridinae</taxon>
        <taxon>Meleagris</taxon>
    </lineage>
</organism>
<keyword id="KW-0002">3D-structure</keyword>
<keyword id="KW-0929">Antimicrobial</keyword>
<keyword id="KW-0081">Bacteriolytic enzyme</keyword>
<keyword id="KW-0903">Direct protein sequencing</keyword>
<keyword id="KW-1015">Disulfide bond</keyword>
<keyword id="KW-0326">Glycosidase</keyword>
<keyword id="KW-0378">Hydrolase</keyword>
<keyword id="KW-1185">Reference proteome</keyword>
<keyword id="KW-0964">Secreted</keyword>
<keyword id="KW-0732">Signal</keyword>
<accession>P00703</accession>
<feature type="signal peptide" evidence="2">
    <location>
        <begin position="1"/>
        <end position="18"/>
    </location>
</feature>
<feature type="chain" id="PRO_0000018497" description="Lysozyme C">
    <location>
        <begin position="19"/>
        <end position="147"/>
    </location>
</feature>
<feature type="domain" description="C-type lysozyme" evidence="1">
    <location>
        <begin position="19"/>
        <end position="147"/>
    </location>
</feature>
<feature type="disulfide bond" evidence="1 3">
    <location>
        <begin position="24"/>
        <end position="145"/>
    </location>
</feature>
<feature type="disulfide bond" evidence="1 3">
    <location>
        <begin position="48"/>
        <end position="133"/>
    </location>
</feature>
<feature type="disulfide bond" evidence="1 3">
    <location>
        <begin position="82"/>
        <end position="98"/>
    </location>
</feature>
<feature type="disulfide bond" evidence="1 3">
    <location>
        <begin position="94"/>
        <end position="112"/>
    </location>
</feature>
<feature type="helix" evidence="4">
    <location>
        <begin position="23"/>
        <end position="32"/>
    </location>
</feature>
<feature type="helix" evidence="6">
    <location>
        <begin position="38"/>
        <end position="40"/>
    </location>
</feature>
<feature type="helix" evidence="4">
    <location>
        <begin position="43"/>
        <end position="54"/>
    </location>
</feature>
<feature type="strand" evidence="7">
    <location>
        <begin position="55"/>
        <end position="59"/>
    </location>
</feature>
<feature type="strand" evidence="4">
    <location>
        <begin position="61"/>
        <end position="63"/>
    </location>
</feature>
<feature type="strand" evidence="4">
    <location>
        <begin position="69"/>
        <end position="71"/>
    </location>
</feature>
<feature type="turn" evidence="4">
    <location>
        <begin position="72"/>
        <end position="75"/>
    </location>
</feature>
<feature type="turn" evidence="4">
    <location>
        <begin position="78"/>
        <end position="81"/>
    </location>
</feature>
<feature type="strand" evidence="4">
    <location>
        <begin position="85"/>
        <end position="87"/>
    </location>
</feature>
<feature type="helix" evidence="4">
    <location>
        <begin position="98"/>
        <end position="102"/>
    </location>
</feature>
<feature type="strand" evidence="4">
    <location>
        <begin position="103"/>
        <end position="105"/>
    </location>
</feature>
<feature type="helix" evidence="4">
    <location>
        <begin position="107"/>
        <end position="117"/>
    </location>
</feature>
<feature type="strand" evidence="5">
    <location>
        <begin position="119"/>
        <end position="121"/>
    </location>
</feature>
<feature type="helix" evidence="4">
    <location>
        <begin position="122"/>
        <end position="125"/>
    </location>
</feature>
<feature type="helix" evidence="4">
    <location>
        <begin position="127"/>
        <end position="132"/>
    </location>
</feature>
<feature type="turn" evidence="4">
    <location>
        <begin position="133"/>
        <end position="135"/>
    </location>
</feature>
<feature type="helix" evidence="4">
    <location>
        <begin position="138"/>
        <end position="142"/>
    </location>
</feature>
<reference key="1">
    <citation type="journal article" date="1986" name="J. Biol. Chem.">
        <title>Evolutionary shift in the site of cleavage of prelysozyme.</title>
        <authorList>
            <person name="Weisman L.S."/>
            <person name="Krummel B.M."/>
            <person name="Wilson A.C."/>
        </authorList>
    </citation>
    <scope>PROTEIN SEQUENCE OF 1-18 (PRECURSOR PROTEIN)</scope>
</reference>
<reference key="2">
    <citation type="journal article" date="1970" name="J. Biol. Chem.">
        <title>Turkey egg white lysozyme. Preparation of the crystalline enzyme and investigation of the amino acid sequence.</title>
        <authorList>
            <person name="Larue J.N."/>
            <person name="Speck J.C. Jr."/>
        </authorList>
    </citation>
    <scope>PROTEIN SEQUENCE OF 19-147</scope>
    <source>
        <tissue>Egg white</tissue>
    </source>
</reference>
<reference key="3">
    <citation type="journal article" date="1977" name="J. Mol. Biol.">
        <title>Crystallographic study of turkey egg-white lysozyme and its complex with a disaccharide.</title>
        <authorList>
            <person name="Sarma R."/>
            <person name="Bott R."/>
        </authorList>
    </citation>
    <scope>X-RAY CRYSTALLOGRAPHY (2.8 ANGSTROMS)</scope>
    <scope>DISULFIDE BONDS</scope>
</reference>
<reference key="4">
    <citation type="journal article" date="1992" name="Acta Crystallogr. B">
        <title>Structure determination of turkey egg-white lysozyme using Laue diffraction data.</title>
        <authorList>
            <person name="Howell P.L."/>
            <person name="Almo S.C."/>
            <person name="Parsons M."/>
            <person name="Petsko G.A."/>
            <person name="Hajdu J."/>
        </authorList>
    </citation>
    <scope>X-RAY CRYSTALLOGRAPHY (2.5 ANGSTROMS)</scope>
</reference>
<reference key="5">
    <citation type="journal article" date="1995" name="Acta Crystallogr. D">
        <title>Structure of hexagonal turkey egg-white lysozyme at 1.65-A resolution.</title>
        <authorList>
            <person name="Howell P.L."/>
        </authorList>
    </citation>
    <scope>X-RAY CRYSTALLOGRAPHY (1.65 ANGSTROMS)</scope>
</reference>
<reference key="6">
    <citation type="journal article" date="1993" name="Eur. J. Biochem.">
        <title>1H-NMR analysis of turkey egg-white lysozyme and comparison with hen egg-white lysozyme.</title>
        <authorList>
            <person name="Bartik K."/>
            <person name="Dobson C.M."/>
            <person name="Redfield C."/>
        </authorList>
    </citation>
    <scope>STRUCTURE BY NMR</scope>
</reference>
<sequence>MRSLLILVLCFLPLAALGKVYGRCELAAAMKRLGLDNYRGYSLGNWVCAAKFESNFNTHATNRNTDGSTDYGILQINSRWWCNDGRTPGSKNLCNIPCSALLSSDITASVNCAKKIASGGNGMNAWVAWRNRCKGTDVHAWIRGCRL</sequence>
<gene>
    <name type="primary">LYZ</name>
</gene>
<comment type="function">
    <text>Lysozymes have primarily a bacteriolytic function; those in tissues and body fluids are associated with the monocyte-macrophage system and enhance the activity of immunoagents.</text>
</comment>
<comment type="catalytic activity">
    <reaction>
        <text>Hydrolysis of (1-&gt;4)-beta-linkages between N-acetylmuramic acid and N-acetyl-D-glucosamine residues in a peptidoglycan and between N-acetyl-D-glucosamine residues in chitodextrins.</text>
        <dbReference type="EC" id="3.2.1.17"/>
    </reaction>
</comment>
<comment type="subunit">
    <text>Monomer.</text>
</comment>
<comment type="subcellular location">
    <subcellularLocation>
        <location>Secreted</location>
    </subcellularLocation>
</comment>
<comment type="miscellaneous">
    <text>Lysozyme C is capable of both hydrolysis and transglycosylation; it also shows a slight esterase activity. It acts rapidly on both peptide-substituted and unsubstituted peptidoglycan, and slowly on chitin oligosaccharides.</text>
</comment>
<comment type="similarity">
    <text evidence="1">Belongs to the glycosyl hydrolase 22 family.</text>
</comment>
<name>LYSC_MELGA</name>
<proteinExistence type="evidence at protein level"/>